<gene>
    <name evidence="1" type="primary">ubiA</name>
    <name type="ordered locus">Neut_1128</name>
</gene>
<comment type="function">
    <text evidence="1">Catalyzes the prenylation of para-hydroxybenzoate (PHB) with an all-trans polyprenyl group. Mediates the second step in the final reaction sequence of ubiquinone-8 (UQ-8) biosynthesis, which is the condensation of the polyisoprenoid side chain with PHB, generating the first membrane-bound Q intermediate 3-octaprenyl-4-hydroxybenzoate.</text>
</comment>
<comment type="catalytic activity">
    <reaction evidence="1">
        <text>all-trans-octaprenyl diphosphate + 4-hydroxybenzoate = 4-hydroxy-3-(all-trans-octaprenyl)benzoate + diphosphate</text>
        <dbReference type="Rhea" id="RHEA:27782"/>
        <dbReference type="ChEBI" id="CHEBI:1617"/>
        <dbReference type="ChEBI" id="CHEBI:17879"/>
        <dbReference type="ChEBI" id="CHEBI:33019"/>
        <dbReference type="ChEBI" id="CHEBI:57711"/>
        <dbReference type="EC" id="2.5.1.39"/>
    </reaction>
</comment>
<comment type="cofactor">
    <cofactor evidence="1">
        <name>Mg(2+)</name>
        <dbReference type="ChEBI" id="CHEBI:18420"/>
    </cofactor>
</comment>
<comment type="pathway">
    <text evidence="1">Cofactor biosynthesis; ubiquinone biosynthesis.</text>
</comment>
<comment type="subcellular location">
    <subcellularLocation>
        <location evidence="1">Cell inner membrane</location>
        <topology evidence="1">Multi-pass membrane protein</topology>
    </subcellularLocation>
</comment>
<comment type="similarity">
    <text evidence="1">Belongs to the UbiA prenyltransferase family.</text>
</comment>
<organism>
    <name type="scientific">Nitrosomonas eutropha (strain DSM 101675 / C91 / Nm57)</name>
    <dbReference type="NCBI Taxonomy" id="335283"/>
    <lineage>
        <taxon>Bacteria</taxon>
        <taxon>Pseudomonadati</taxon>
        <taxon>Pseudomonadota</taxon>
        <taxon>Betaproteobacteria</taxon>
        <taxon>Nitrosomonadales</taxon>
        <taxon>Nitrosomonadaceae</taxon>
        <taxon>Nitrosomonas</taxon>
    </lineage>
</organism>
<dbReference type="EC" id="2.5.1.39" evidence="1"/>
<dbReference type="EMBL" id="CP000450">
    <property type="protein sequence ID" value="ABI59383.1"/>
    <property type="molecule type" value="Genomic_DNA"/>
</dbReference>
<dbReference type="RefSeq" id="WP_011634203.1">
    <property type="nucleotide sequence ID" value="NC_008344.1"/>
</dbReference>
<dbReference type="SMR" id="Q0AGZ9"/>
<dbReference type="STRING" id="335283.Neut_1128"/>
<dbReference type="KEGG" id="net:Neut_1128"/>
<dbReference type="eggNOG" id="COG0382">
    <property type="taxonomic scope" value="Bacteria"/>
</dbReference>
<dbReference type="HOGENOM" id="CLU_034879_1_0_4"/>
<dbReference type="OrthoDB" id="9782418at2"/>
<dbReference type="UniPathway" id="UPA00232"/>
<dbReference type="Proteomes" id="UP000001966">
    <property type="component" value="Chromosome"/>
</dbReference>
<dbReference type="GO" id="GO:0005886">
    <property type="term" value="C:plasma membrane"/>
    <property type="evidence" value="ECO:0007669"/>
    <property type="project" value="UniProtKB-SubCell"/>
</dbReference>
<dbReference type="GO" id="GO:0008412">
    <property type="term" value="F:4-hydroxybenzoate polyprenyltransferase activity"/>
    <property type="evidence" value="ECO:0007669"/>
    <property type="project" value="UniProtKB-UniRule"/>
</dbReference>
<dbReference type="GO" id="GO:0006744">
    <property type="term" value="P:ubiquinone biosynthetic process"/>
    <property type="evidence" value="ECO:0007669"/>
    <property type="project" value="UniProtKB-UniRule"/>
</dbReference>
<dbReference type="CDD" id="cd13959">
    <property type="entry name" value="PT_UbiA_COQ2"/>
    <property type="match status" value="1"/>
</dbReference>
<dbReference type="FunFam" id="1.10.357.140:FF:000002">
    <property type="entry name" value="4-hydroxybenzoate octaprenyltransferase"/>
    <property type="match status" value="1"/>
</dbReference>
<dbReference type="FunFam" id="1.20.120.1780:FF:000001">
    <property type="entry name" value="4-hydroxybenzoate octaprenyltransferase"/>
    <property type="match status" value="1"/>
</dbReference>
<dbReference type="Gene3D" id="1.10.357.140">
    <property type="entry name" value="UbiA prenyltransferase"/>
    <property type="match status" value="1"/>
</dbReference>
<dbReference type="Gene3D" id="1.20.120.1780">
    <property type="entry name" value="UbiA prenyltransferase"/>
    <property type="match status" value="1"/>
</dbReference>
<dbReference type="HAMAP" id="MF_01635">
    <property type="entry name" value="UbiA"/>
    <property type="match status" value="1"/>
</dbReference>
<dbReference type="InterPro" id="IPR006370">
    <property type="entry name" value="HB_polyprenyltransferase-like"/>
</dbReference>
<dbReference type="InterPro" id="IPR039653">
    <property type="entry name" value="Prenyltransferase"/>
</dbReference>
<dbReference type="InterPro" id="IPR000537">
    <property type="entry name" value="UbiA_prenyltransferase"/>
</dbReference>
<dbReference type="InterPro" id="IPR030470">
    <property type="entry name" value="UbiA_prenylTrfase_CS"/>
</dbReference>
<dbReference type="InterPro" id="IPR044878">
    <property type="entry name" value="UbiA_sf"/>
</dbReference>
<dbReference type="NCBIfam" id="TIGR01474">
    <property type="entry name" value="ubiA_proteo"/>
    <property type="match status" value="1"/>
</dbReference>
<dbReference type="PANTHER" id="PTHR11048:SF28">
    <property type="entry name" value="4-HYDROXYBENZOATE POLYPRENYLTRANSFERASE, MITOCHONDRIAL"/>
    <property type="match status" value="1"/>
</dbReference>
<dbReference type="PANTHER" id="PTHR11048">
    <property type="entry name" value="PRENYLTRANSFERASES"/>
    <property type="match status" value="1"/>
</dbReference>
<dbReference type="Pfam" id="PF01040">
    <property type="entry name" value="UbiA"/>
    <property type="match status" value="1"/>
</dbReference>
<dbReference type="PROSITE" id="PS00943">
    <property type="entry name" value="UBIA"/>
    <property type="match status" value="1"/>
</dbReference>
<reference key="1">
    <citation type="journal article" date="2007" name="Environ. Microbiol.">
        <title>Whole-genome analysis of the ammonia-oxidizing bacterium, Nitrosomonas eutropha C91: implications for niche adaptation.</title>
        <authorList>
            <person name="Stein L.Y."/>
            <person name="Arp D.J."/>
            <person name="Berube P.M."/>
            <person name="Chain P.S."/>
            <person name="Hauser L."/>
            <person name="Jetten M.S."/>
            <person name="Klotz M.G."/>
            <person name="Larimer F.W."/>
            <person name="Norton J.M."/>
            <person name="Op den Camp H.J.M."/>
            <person name="Shin M."/>
            <person name="Wei X."/>
        </authorList>
    </citation>
    <scope>NUCLEOTIDE SEQUENCE [LARGE SCALE GENOMIC DNA]</scope>
    <source>
        <strain>DSM 101675 / C91 / Nm57</strain>
    </source>
</reference>
<name>UBIA_NITEC</name>
<accession>Q0AGZ9</accession>
<evidence type="ECO:0000255" key="1">
    <source>
        <dbReference type="HAMAP-Rule" id="MF_01635"/>
    </source>
</evidence>
<keyword id="KW-0997">Cell inner membrane</keyword>
<keyword id="KW-1003">Cell membrane</keyword>
<keyword id="KW-0460">Magnesium</keyword>
<keyword id="KW-0472">Membrane</keyword>
<keyword id="KW-0808">Transferase</keyword>
<keyword id="KW-0812">Transmembrane</keyword>
<keyword id="KW-1133">Transmembrane helix</keyword>
<keyword id="KW-0831">Ubiquinone biosynthesis</keyword>
<sequence>MTFSERFSAYARLTRLDKPIGILLLLWPTLWGLWLAADGMPDPMILVIFVLGTILMRSAGCAINDFADRKIDPHVSRTRNRPLATGIISSREALLVAAGLSLCAFLLILPLNLLTILLSVPALLLAISYPFTKRFFAMPQAYLGIAFSFGIPMAFAAQTGTVPPLAWLLVLANLFWVIAYDTEYALVDLADDLKIGIKTSAITFGRFDVAGILLCHITFLSILTYAGILLQRGIWFYGALLVALGLVIVQYTMIRNREPARCFQAFLHNNRVGAVIFAGILLDTLI</sequence>
<protein>
    <recommendedName>
        <fullName evidence="1">4-hydroxybenzoate octaprenyltransferase</fullName>
        <ecNumber evidence="1">2.5.1.39</ecNumber>
    </recommendedName>
    <alternativeName>
        <fullName evidence="1">4-HB polyprenyltransferase</fullName>
    </alternativeName>
</protein>
<feature type="chain" id="PRO_1000069826" description="4-hydroxybenzoate octaprenyltransferase">
    <location>
        <begin position="1"/>
        <end position="286"/>
    </location>
</feature>
<feature type="transmembrane region" description="Helical" evidence="1">
    <location>
        <begin position="20"/>
        <end position="40"/>
    </location>
</feature>
<feature type="transmembrane region" description="Helical" evidence="1">
    <location>
        <begin position="43"/>
        <end position="63"/>
    </location>
</feature>
<feature type="transmembrane region" description="Helical" evidence="1">
    <location>
        <begin position="83"/>
        <end position="103"/>
    </location>
</feature>
<feature type="transmembrane region" description="Helical" evidence="1">
    <location>
        <begin position="135"/>
        <end position="155"/>
    </location>
</feature>
<feature type="transmembrane region" description="Helical" evidence="1">
    <location>
        <begin position="160"/>
        <end position="180"/>
    </location>
</feature>
<feature type="transmembrane region" description="Helical" evidence="1">
    <location>
        <begin position="209"/>
        <end position="229"/>
    </location>
</feature>
<feature type="transmembrane region" description="Helical" evidence="1">
    <location>
        <begin position="234"/>
        <end position="254"/>
    </location>
</feature>
<proteinExistence type="inferred from homology"/>